<keyword id="KW-0027">Amidation</keyword>
<keyword id="KW-0903">Direct protein sequencing</keyword>
<keyword id="KW-0527">Neuropeptide</keyword>
<keyword id="KW-0964">Secreted</keyword>
<name>PVK2_DERIN</name>
<organism>
    <name type="scientific">Deropeltis integerrima</name>
    <name type="common">Cockroach</name>
    <name type="synonym">Deropeltis cf. schweinfurthii (strain SR-2005)</name>
    <dbReference type="NCBI Taxonomy" id="596121"/>
    <lineage>
        <taxon>Eukaryota</taxon>
        <taxon>Metazoa</taxon>
        <taxon>Ecdysozoa</taxon>
        <taxon>Arthropoda</taxon>
        <taxon>Hexapoda</taxon>
        <taxon>Insecta</taxon>
        <taxon>Pterygota</taxon>
        <taxon>Neoptera</taxon>
        <taxon>Polyneoptera</taxon>
        <taxon>Dictyoptera</taxon>
        <taxon>Blattodea</taxon>
        <taxon>Blattoidea</taxon>
        <taxon>Blattidae</taxon>
        <taxon>Blattinae</taxon>
        <taxon>Deropeltis</taxon>
    </lineage>
</organism>
<comment type="function">
    <text evidence="4">Mediates visceral muscle contractile activity (myotropic activity).</text>
</comment>
<comment type="subcellular location">
    <subcellularLocation>
        <location evidence="4">Secreted</location>
    </subcellularLocation>
</comment>
<comment type="similarity">
    <text evidence="1">Belongs to the periviscerokinin family.</text>
</comment>
<evidence type="ECO:0000255" key="1"/>
<evidence type="ECO:0000269" key="2">
    <source>
    </source>
</evidence>
<evidence type="ECO:0000303" key="3">
    <source>
    </source>
</evidence>
<evidence type="ECO:0000305" key="4"/>
<sequence>GSSGLISMPRV</sequence>
<feature type="peptide" id="PRO_0000378783" description="Periviscerokinin-2" evidence="2">
    <location>
        <begin position="1"/>
        <end position="11"/>
    </location>
</feature>
<feature type="modified residue" description="Valine amide" evidence="2">
    <location>
        <position position="11"/>
    </location>
</feature>
<dbReference type="GO" id="GO:0005576">
    <property type="term" value="C:extracellular region"/>
    <property type="evidence" value="ECO:0007669"/>
    <property type="project" value="UniProtKB-SubCell"/>
</dbReference>
<dbReference type="GO" id="GO:0007218">
    <property type="term" value="P:neuropeptide signaling pathway"/>
    <property type="evidence" value="ECO:0007669"/>
    <property type="project" value="UniProtKB-KW"/>
</dbReference>
<dbReference type="InterPro" id="IPR013231">
    <property type="entry name" value="Periviscerokinin"/>
</dbReference>
<dbReference type="Pfam" id="PF08259">
    <property type="entry name" value="Periviscerokin"/>
    <property type="match status" value="1"/>
</dbReference>
<proteinExistence type="evidence at protein level"/>
<protein>
    <recommendedName>
        <fullName evidence="3">Periviscerokinin-2</fullName>
        <shortName evidence="3">DerIn-PVK-2</shortName>
    </recommendedName>
</protein>
<reference evidence="4" key="1">
    <citation type="journal article" date="2009" name="BMC Evol. Biol.">
        <title>A proteomic approach for studying insect phylogeny: CAPA peptides of ancient insect taxa (Dictyoptera, Blattoptera) as a test case.</title>
        <authorList>
            <person name="Roth S."/>
            <person name="Fromm B."/>
            <person name="Gaede G."/>
            <person name="Predel R."/>
        </authorList>
    </citation>
    <scope>PROTEIN SEQUENCE</scope>
    <scope>AMIDATION AT VAL-11</scope>
    <source>
        <tissue evidence="2">Abdominal perisympathetic organs</tissue>
    </source>
</reference>
<accession>P85588</accession>